<reference evidence="8" key="1">
    <citation type="journal article" date="1995" name="Proc. Natl. Acad. Sci. U.S.A.">
        <title>Molecular cloning of insect pro-phenol oxidase: a copper-containing protein homologous to arthropod hemocyanin.</title>
        <authorList>
            <person name="Kawabata T."/>
            <person name="Yasuhara Y."/>
            <person name="Ochiai M."/>
            <person name="Matsuura S."/>
            <person name="Ashida M."/>
        </authorList>
    </citation>
    <scope>NUCLEOTIDE SEQUENCE [MRNA]</scope>
    <scope>PARTIAL PROTEIN SEQUENCE</scope>
    <source>
        <strain evidence="5">Kinshu X Showa</strain>
        <tissue evidence="5">Hemocyte</tissue>
    </source>
</reference>
<reference evidence="8" key="2">
    <citation type="submission" date="2000-09" db="EMBL/GenBank/DDBJ databases">
        <authorList>
            <person name="Asano T."/>
            <person name="Ashida M."/>
        </authorList>
    </citation>
    <scope>NUCLEOTIDE SEQUENCE [MRNA]</scope>
</reference>
<reference evidence="8" key="3">
    <citation type="journal article" date="1995" name="Arch. Biochem. Biophys.">
        <title>Reexamination of properties of phenoloxidase isolated from larval hemolymph of the silkworm Bombyx mori.</title>
        <authorList>
            <person name="Yasuhara Y."/>
            <person name="Koizumi Y."/>
            <person name="Katagiri C."/>
            <person name="Ashida M."/>
        </authorList>
    </citation>
    <scope>MASS SPECTROMETRY</scope>
    <source>
        <tissue evidence="6">Hemocyte</tissue>
    </source>
</reference>
<keyword id="KW-0186">Copper</keyword>
<keyword id="KW-0903">Direct protein sequencing</keyword>
<keyword id="KW-1015">Disulfide bond</keyword>
<keyword id="KW-0325">Glycoprotein</keyword>
<keyword id="KW-0470">Melanin biosynthesis</keyword>
<keyword id="KW-0479">Metal-binding</keyword>
<keyword id="KW-0503">Monooxygenase</keyword>
<keyword id="KW-0560">Oxidoreductase</keyword>
<keyword id="KW-1185">Reference proteome</keyword>
<keyword id="KW-0964">Secreted</keyword>
<keyword id="KW-0865">Zymogen</keyword>
<feature type="propeptide" id="PRO_0000035901" evidence="5">
    <location>
        <begin position="1"/>
        <end position="51"/>
    </location>
</feature>
<feature type="chain" id="PRO_0000035902" description="Phenoloxidase subunit 2">
    <location>
        <begin position="52"/>
        <end position="693"/>
    </location>
</feature>
<feature type="active site" description="Proton acceptor" evidence="2">
    <location>
        <position position="351"/>
    </location>
</feature>
<feature type="binding site" evidence="3">
    <location>
        <position position="213"/>
    </location>
    <ligand>
        <name>Cu cation</name>
        <dbReference type="ChEBI" id="CHEBI:23378"/>
        <label>A</label>
    </ligand>
</feature>
<feature type="binding site" evidence="3">
    <location>
        <position position="217"/>
    </location>
    <ligand>
        <name>Cu cation</name>
        <dbReference type="ChEBI" id="CHEBI:23378"/>
        <label>A</label>
    </ligand>
</feature>
<feature type="binding site" evidence="3">
    <location>
        <position position="243"/>
    </location>
    <ligand>
        <name>Cu cation</name>
        <dbReference type="ChEBI" id="CHEBI:23378"/>
        <label>A</label>
    </ligand>
</feature>
<feature type="binding site" evidence="3">
    <location>
        <position position="366"/>
    </location>
    <ligand>
        <name>Cu cation</name>
        <dbReference type="ChEBI" id="CHEBI:23378"/>
        <label>B</label>
    </ligand>
</feature>
<feature type="binding site" evidence="3">
    <location>
        <position position="370"/>
    </location>
    <ligand>
        <name>Cu cation</name>
        <dbReference type="ChEBI" id="CHEBI:23378"/>
        <label>B</label>
    </ligand>
</feature>
<feature type="binding site" evidence="3">
    <location>
        <position position="406"/>
    </location>
    <ligand>
        <name>Cu cation</name>
        <dbReference type="ChEBI" id="CHEBI:23378"/>
        <label>B</label>
    </ligand>
</feature>
<feature type="glycosylation site" description="N-linked (GlcNAc...) asparagine" evidence="4">
    <location>
        <position position="26"/>
    </location>
</feature>
<feature type="glycosylation site" description="N-linked (GlcNAc...) asparagine" evidence="4">
    <location>
        <position position="64"/>
    </location>
</feature>
<feature type="glycosylation site" description="N-linked (GlcNAc...) asparagine" evidence="4">
    <location>
        <position position="462"/>
    </location>
</feature>
<feature type="glycosylation site" description="N-linked (GlcNAc...) asparagine" evidence="4">
    <location>
        <position position="494"/>
    </location>
</feature>
<feature type="glycosylation site" description="N-linked (GlcNAc...) asparagine" evidence="4">
    <location>
        <position position="680"/>
    </location>
</feature>
<feature type="disulfide bond" evidence="3">
    <location>
        <begin position="583"/>
        <end position="627"/>
    </location>
</feature>
<feature type="disulfide bond" evidence="3">
    <location>
        <begin position="585"/>
        <end position="634"/>
    </location>
</feature>
<feature type="sequence conflict" description="In Ref. 1; AA sequence." evidence="8" ref="1">
    <original>P</original>
    <variation>Q</variation>
    <location>
        <position position="433"/>
    </location>
</feature>
<dbReference type="EC" id="1.14.18.1"/>
<dbReference type="EMBL" id="D49371">
    <property type="protein sequence ID" value="BAA08369.1"/>
    <property type="molecule type" value="mRNA"/>
</dbReference>
<dbReference type="EMBL" id="AB048762">
    <property type="protein sequence ID" value="BAB41101.1"/>
    <property type="molecule type" value="mRNA"/>
</dbReference>
<dbReference type="RefSeq" id="NP_001037534.1">
    <property type="nucleotide sequence ID" value="NM_001044069.2"/>
</dbReference>
<dbReference type="SMR" id="Q27452"/>
<dbReference type="STRING" id="7091.Q27452"/>
<dbReference type="PaxDb" id="7091-BGIBMGA013115-TA"/>
<dbReference type="EnsemblMetazoa" id="NM_001044069.1">
    <property type="protein sequence ID" value="NP_001037534.1"/>
    <property type="gene ID" value="GeneID_693073"/>
</dbReference>
<dbReference type="GeneID" id="693073"/>
<dbReference type="KEGG" id="bmor:693073"/>
<dbReference type="CTD" id="35910"/>
<dbReference type="eggNOG" id="ENOG502S0I4">
    <property type="taxonomic scope" value="Eukaryota"/>
</dbReference>
<dbReference type="HOGENOM" id="CLU_012213_0_1_1"/>
<dbReference type="InParanoid" id="Q27452"/>
<dbReference type="OMA" id="LMHRRDT"/>
<dbReference type="OrthoDB" id="214782at7088"/>
<dbReference type="Proteomes" id="UP000005204">
    <property type="component" value="Unassembled WGS sequence"/>
</dbReference>
<dbReference type="GO" id="GO:0005576">
    <property type="term" value="C:extracellular region"/>
    <property type="evidence" value="ECO:0000304"/>
    <property type="project" value="UniProtKB"/>
</dbReference>
<dbReference type="GO" id="GO:0046872">
    <property type="term" value="F:metal ion binding"/>
    <property type="evidence" value="ECO:0007669"/>
    <property type="project" value="UniProtKB-KW"/>
</dbReference>
<dbReference type="GO" id="GO:0004503">
    <property type="term" value="F:tyrosinase activity"/>
    <property type="evidence" value="ECO:0000304"/>
    <property type="project" value="UniProtKB"/>
</dbReference>
<dbReference type="GO" id="GO:0006952">
    <property type="term" value="P:defense response"/>
    <property type="evidence" value="ECO:0000304"/>
    <property type="project" value="UniProtKB"/>
</dbReference>
<dbReference type="GO" id="GO:0006583">
    <property type="term" value="P:melanin biosynthetic process from tyrosine"/>
    <property type="evidence" value="ECO:0000304"/>
    <property type="project" value="UniProtKB"/>
</dbReference>
<dbReference type="FunFam" id="1.10.1280.10:FF:000004">
    <property type="entry name" value="Hemocyanin subunit 2"/>
    <property type="match status" value="1"/>
</dbReference>
<dbReference type="FunFam" id="2.60.40.1520:FF:000001">
    <property type="entry name" value="Hemocyanin subunit 2"/>
    <property type="match status" value="1"/>
</dbReference>
<dbReference type="FunFam" id="1.20.1370.10:FF:000001">
    <property type="entry name" value="Phenoloxidase 2"/>
    <property type="match status" value="1"/>
</dbReference>
<dbReference type="Gene3D" id="1.10.1280.10">
    <property type="entry name" value="Di-copper center containing domain from catechol oxidase"/>
    <property type="match status" value="1"/>
</dbReference>
<dbReference type="Gene3D" id="2.60.40.1520">
    <property type="entry name" value="Hemocyanin, C-terminal domain"/>
    <property type="match status" value="1"/>
</dbReference>
<dbReference type="Gene3D" id="1.20.1370.10">
    <property type="entry name" value="Hemocyanin, N-terminal domain"/>
    <property type="match status" value="1"/>
</dbReference>
<dbReference type="InterPro" id="IPR008922">
    <property type="entry name" value="Di-copper_centre_dom_sf"/>
</dbReference>
<dbReference type="InterPro" id="IPR013788">
    <property type="entry name" value="Hemocyanin/hexamerin"/>
</dbReference>
<dbReference type="InterPro" id="IPR000896">
    <property type="entry name" value="Hemocyanin/hexamerin_mid_dom"/>
</dbReference>
<dbReference type="InterPro" id="IPR005203">
    <property type="entry name" value="Hemocyanin_C"/>
</dbReference>
<dbReference type="InterPro" id="IPR037020">
    <property type="entry name" value="Hemocyanin_C_sf"/>
</dbReference>
<dbReference type="InterPro" id="IPR005204">
    <property type="entry name" value="Hemocyanin_N"/>
</dbReference>
<dbReference type="InterPro" id="IPR036697">
    <property type="entry name" value="Hemocyanin_N_sf"/>
</dbReference>
<dbReference type="InterPro" id="IPR014756">
    <property type="entry name" value="Ig_E-set"/>
</dbReference>
<dbReference type="InterPro" id="IPR002227">
    <property type="entry name" value="Tyrosinase_Cu-bd"/>
</dbReference>
<dbReference type="PANTHER" id="PTHR11511">
    <property type="entry name" value="LARVAL STORAGE PROTEIN/PHENOLOXIDASE"/>
    <property type="match status" value="1"/>
</dbReference>
<dbReference type="PANTHER" id="PTHR11511:SF4">
    <property type="entry name" value="PHENOLOXIDASE 2-RELATED"/>
    <property type="match status" value="1"/>
</dbReference>
<dbReference type="Pfam" id="PF03723">
    <property type="entry name" value="Hemocyanin_C"/>
    <property type="match status" value="1"/>
</dbReference>
<dbReference type="Pfam" id="PF00372">
    <property type="entry name" value="Hemocyanin_M"/>
    <property type="match status" value="1"/>
</dbReference>
<dbReference type="Pfam" id="PF03722">
    <property type="entry name" value="Hemocyanin_N"/>
    <property type="match status" value="1"/>
</dbReference>
<dbReference type="PRINTS" id="PR00187">
    <property type="entry name" value="HAEMOCYANIN"/>
</dbReference>
<dbReference type="SUPFAM" id="SSF48056">
    <property type="entry name" value="Di-copper centre-containing domain"/>
    <property type="match status" value="1"/>
</dbReference>
<dbReference type="SUPFAM" id="SSF81296">
    <property type="entry name" value="E set domains"/>
    <property type="match status" value="1"/>
</dbReference>
<dbReference type="SUPFAM" id="SSF48050">
    <property type="entry name" value="Hemocyanin, N-terminal domain"/>
    <property type="match status" value="1"/>
</dbReference>
<dbReference type="PROSITE" id="PS00209">
    <property type="entry name" value="HEMOCYANIN_1"/>
    <property type="match status" value="1"/>
</dbReference>
<dbReference type="PROSITE" id="PS00210">
    <property type="entry name" value="HEMOCYANIN_2"/>
    <property type="match status" value="1"/>
</dbReference>
<dbReference type="PROSITE" id="PS00498">
    <property type="entry name" value="TYROSINASE_2"/>
    <property type="match status" value="1"/>
</dbReference>
<proteinExistence type="evidence at protein level"/>
<accession>Q27452</accession>
<evidence type="ECO:0000250" key="1">
    <source>
        <dbReference type="UniProtKB" id="P04253"/>
    </source>
</evidence>
<evidence type="ECO:0000250" key="2">
    <source>
        <dbReference type="UniProtKB" id="Q8MZM3"/>
    </source>
</evidence>
<evidence type="ECO:0000250" key="3">
    <source>
        <dbReference type="UniProtKB" id="Q9ZP19"/>
    </source>
</evidence>
<evidence type="ECO:0000255" key="4"/>
<evidence type="ECO:0000269" key="5">
    <source>
    </source>
</evidence>
<evidence type="ECO:0000269" key="6">
    <source>
    </source>
</evidence>
<evidence type="ECO:0000303" key="7">
    <source>
    </source>
</evidence>
<evidence type="ECO:0000305" key="8"/>
<evidence type="ECO:0000312" key="9">
    <source>
        <dbReference type="EMBL" id="BAB41101.1"/>
    </source>
</evidence>
<protein>
    <recommendedName>
        <fullName>Phenoloxidase subunit 2</fullName>
        <ecNumber>1.14.18.1</ecNumber>
    </recommendedName>
    <alternativeName>
        <fullName>PO 2</fullName>
    </alternativeName>
    <alternativeName>
        <fullName>Tyrosinase 2</fullName>
    </alternativeName>
</protein>
<sequence>MADVFESLELLFDRPNEPLITPKGENNSVFQLTEQFLTEDYANNGIELNNRFGDDASEKIPLKNLSKLPEFKIATQLPKDAEFSLFLPKHQEMANELLGVLMDVPENELQDLLSTCAFARVNLNPQLFNYCYSVALMHRRDTRKVRVKNFAEVFPSKFLDSQVFTQARETAAVIPPDVPRIPIIIPRDYTATDLEEEHRLAYWREDIGINLHHYHWHLVYPFTANDLSIVAKDRRGELFFYMHQQVIARFNCERLCNSLKRVKKFSNWREPIPEAYFPKLDSLTSSRGWPPRQSGMQWQDLNRAAEGLFVTIDEMERWRRNVEEAIATGTVRLPNGQTRPLDIDTLGNMLESSALSPNRELYGSIHNNGHSFTAYMHDPEHRYLEQFGVIADEATTMRDPFFYRWHAYIDDVFQKHKESAYVRPYTRSELENPGVQVRSVSVETPGGQPNTLNTFWMLSDVNLSRGLDFSDNGPVYARFTHLNYRHFSYRINVNNTGSSRRTTVRIFITPKFDERNVPWIFSDQRKMCIEMDRFVTVLNAGENNIVRQSTESSITIPFEQTFRDLSAQGNDPRRDELATFNYCGCGWPQHMLVPKGTEAGMPFQLFVMLSNYDLDRIDQDDGKQLTCVEASSFCGLKDKKYPDRRAMGFPFDRPSSSATSLQDFILPNMGLQDITIQLQNVTEPNPRNPPMSV</sequence>
<organism evidence="9">
    <name type="scientific">Bombyx mori</name>
    <name type="common">Silk moth</name>
    <dbReference type="NCBI Taxonomy" id="7091"/>
    <lineage>
        <taxon>Eukaryota</taxon>
        <taxon>Metazoa</taxon>
        <taxon>Ecdysozoa</taxon>
        <taxon>Arthropoda</taxon>
        <taxon>Hexapoda</taxon>
        <taxon>Insecta</taxon>
        <taxon>Pterygota</taxon>
        <taxon>Neoptera</taxon>
        <taxon>Endopterygota</taxon>
        <taxon>Lepidoptera</taxon>
        <taxon>Glossata</taxon>
        <taxon>Ditrysia</taxon>
        <taxon>Bombycoidea</taxon>
        <taxon>Bombycidae</taxon>
        <taxon>Bombycinae</taxon>
        <taxon>Bombyx</taxon>
    </lineage>
</organism>
<comment type="function">
    <text>This is a copper-containing oxidase that functions in the formation of pigments such as melanins and other polyphenolic compounds. Catalyzes the rate-limiting conversions of tyrosine to DOPA, DOPA to DOPA-quinone and possibly 5,6 dihydroxyindole to indole-5'6 quinone.</text>
</comment>
<comment type="catalytic activity">
    <reaction>
        <text>2 L-dopa + O2 = 2 L-dopaquinone + 2 H2O</text>
        <dbReference type="Rhea" id="RHEA:34287"/>
        <dbReference type="ChEBI" id="CHEBI:15377"/>
        <dbReference type="ChEBI" id="CHEBI:15379"/>
        <dbReference type="ChEBI" id="CHEBI:57504"/>
        <dbReference type="ChEBI" id="CHEBI:57924"/>
        <dbReference type="EC" id="1.14.18.1"/>
    </reaction>
</comment>
<comment type="catalytic activity">
    <reaction>
        <text>L-tyrosine + O2 = L-dopaquinone + H2O</text>
        <dbReference type="Rhea" id="RHEA:18117"/>
        <dbReference type="ChEBI" id="CHEBI:15377"/>
        <dbReference type="ChEBI" id="CHEBI:15379"/>
        <dbReference type="ChEBI" id="CHEBI:57924"/>
        <dbReference type="ChEBI" id="CHEBI:58315"/>
        <dbReference type="EC" id="1.14.18.1"/>
    </reaction>
</comment>
<comment type="cofactor">
    <cofactor evidence="1">
        <name>Cu(2+)</name>
        <dbReference type="ChEBI" id="CHEBI:29036"/>
    </cofactor>
    <text evidence="1">Binds 2 copper ions per subunit.</text>
</comment>
<comment type="subunit">
    <text evidence="5">Heterodimer.</text>
</comment>
<comment type="subcellular location">
    <subcellularLocation>
        <location>Secreted</location>
    </subcellularLocation>
</comment>
<comment type="tissue specificity">
    <text evidence="7">Synthesized by hemocytes and released into the hemolymph plasma.</text>
</comment>
<comment type="PTM">
    <text evidence="6">The N-terminus is blocked.</text>
</comment>
<comment type="mass spectrometry"/>
<comment type="similarity">
    <text evidence="8">Belongs to the tyrosinase family.</text>
</comment>
<name>PRP2_BOMMO</name>